<reference key="1">
    <citation type="journal article" date="2006" name="Genome Res.">
        <title>Massive genome erosion and functional adaptations provide insights into the symbiotic lifestyle of Sodalis glossinidius in the tsetse host.</title>
        <authorList>
            <person name="Toh H."/>
            <person name="Weiss B.L."/>
            <person name="Perkin S.A.H."/>
            <person name="Yamashita A."/>
            <person name="Oshima K."/>
            <person name="Hattori M."/>
            <person name="Aksoy S."/>
        </authorList>
    </citation>
    <scope>NUCLEOTIDE SEQUENCE [LARGE SCALE GENOMIC DNA]</scope>
    <source>
        <strain>morsitans</strain>
    </source>
</reference>
<protein>
    <recommendedName>
        <fullName evidence="1">ATP-dependent Clp protease ATP-binding subunit ClpX</fullName>
    </recommendedName>
</protein>
<gene>
    <name evidence="1" type="primary">clpX</name>
    <name type="ordered locus">SG0672</name>
</gene>
<evidence type="ECO:0000255" key="1">
    <source>
        <dbReference type="HAMAP-Rule" id="MF_00175"/>
    </source>
</evidence>
<evidence type="ECO:0000255" key="2">
    <source>
        <dbReference type="PROSITE-ProRule" id="PRU01250"/>
    </source>
</evidence>
<dbReference type="EMBL" id="AP008232">
    <property type="protein sequence ID" value="BAE73947.1"/>
    <property type="molecule type" value="Genomic_DNA"/>
</dbReference>
<dbReference type="RefSeq" id="WP_011410535.1">
    <property type="nucleotide sequence ID" value="NC_007712.1"/>
</dbReference>
<dbReference type="SMR" id="Q2NV78"/>
<dbReference type="STRING" id="343509.SG0672"/>
<dbReference type="KEGG" id="sgl:SG0672"/>
<dbReference type="eggNOG" id="COG1219">
    <property type="taxonomic scope" value="Bacteria"/>
</dbReference>
<dbReference type="HOGENOM" id="CLU_014218_8_2_6"/>
<dbReference type="OrthoDB" id="9804062at2"/>
<dbReference type="BioCyc" id="SGLO343509:SGP1_RS05770-MONOMER"/>
<dbReference type="Proteomes" id="UP000001932">
    <property type="component" value="Chromosome"/>
</dbReference>
<dbReference type="GO" id="GO:0009376">
    <property type="term" value="C:HslUV protease complex"/>
    <property type="evidence" value="ECO:0007669"/>
    <property type="project" value="TreeGrafter"/>
</dbReference>
<dbReference type="GO" id="GO:0005524">
    <property type="term" value="F:ATP binding"/>
    <property type="evidence" value="ECO:0007669"/>
    <property type="project" value="UniProtKB-UniRule"/>
</dbReference>
<dbReference type="GO" id="GO:0016887">
    <property type="term" value="F:ATP hydrolysis activity"/>
    <property type="evidence" value="ECO:0007669"/>
    <property type="project" value="InterPro"/>
</dbReference>
<dbReference type="GO" id="GO:0140662">
    <property type="term" value="F:ATP-dependent protein folding chaperone"/>
    <property type="evidence" value="ECO:0007669"/>
    <property type="project" value="InterPro"/>
</dbReference>
<dbReference type="GO" id="GO:0046983">
    <property type="term" value="F:protein dimerization activity"/>
    <property type="evidence" value="ECO:0007669"/>
    <property type="project" value="InterPro"/>
</dbReference>
<dbReference type="GO" id="GO:0051082">
    <property type="term" value="F:unfolded protein binding"/>
    <property type="evidence" value="ECO:0007669"/>
    <property type="project" value="UniProtKB-UniRule"/>
</dbReference>
<dbReference type="GO" id="GO:0008270">
    <property type="term" value="F:zinc ion binding"/>
    <property type="evidence" value="ECO:0007669"/>
    <property type="project" value="InterPro"/>
</dbReference>
<dbReference type="GO" id="GO:0051301">
    <property type="term" value="P:cell division"/>
    <property type="evidence" value="ECO:0007669"/>
    <property type="project" value="TreeGrafter"/>
</dbReference>
<dbReference type="GO" id="GO:0051603">
    <property type="term" value="P:proteolysis involved in protein catabolic process"/>
    <property type="evidence" value="ECO:0007669"/>
    <property type="project" value="TreeGrafter"/>
</dbReference>
<dbReference type="CDD" id="cd19497">
    <property type="entry name" value="RecA-like_ClpX"/>
    <property type="match status" value="1"/>
</dbReference>
<dbReference type="FunFam" id="1.10.8.60:FF:000002">
    <property type="entry name" value="ATP-dependent Clp protease ATP-binding subunit ClpX"/>
    <property type="match status" value="1"/>
</dbReference>
<dbReference type="FunFam" id="3.40.50.300:FF:000005">
    <property type="entry name" value="ATP-dependent Clp protease ATP-binding subunit ClpX"/>
    <property type="match status" value="1"/>
</dbReference>
<dbReference type="Gene3D" id="1.10.8.60">
    <property type="match status" value="1"/>
</dbReference>
<dbReference type="Gene3D" id="6.20.220.10">
    <property type="entry name" value="ClpX chaperone, C4-type zinc finger domain"/>
    <property type="match status" value="1"/>
</dbReference>
<dbReference type="Gene3D" id="3.40.50.300">
    <property type="entry name" value="P-loop containing nucleotide triphosphate hydrolases"/>
    <property type="match status" value="1"/>
</dbReference>
<dbReference type="HAMAP" id="MF_00175">
    <property type="entry name" value="ClpX"/>
    <property type="match status" value="1"/>
</dbReference>
<dbReference type="InterPro" id="IPR003593">
    <property type="entry name" value="AAA+_ATPase"/>
</dbReference>
<dbReference type="InterPro" id="IPR050052">
    <property type="entry name" value="ATP-dep_Clp_protease_ClpX"/>
</dbReference>
<dbReference type="InterPro" id="IPR003959">
    <property type="entry name" value="ATPase_AAA_core"/>
</dbReference>
<dbReference type="InterPro" id="IPR019489">
    <property type="entry name" value="Clp_ATPase_C"/>
</dbReference>
<dbReference type="InterPro" id="IPR004487">
    <property type="entry name" value="Clp_protease_ATP-bd_su_ClpX"/>
</dbReference>
<dbReference type="InterPro" id="IPR046425">
    <property type="entry name" value="ClpX_bact"/>
</dbReference>
<dbReference type="InterPro" id="IPR027417">
    <property type="entry name" value="P-loop_NTPase"/>
</dbReference>
<dbReference type="InterPro" id="IPR010603">
    <property type="entry name" value="Znf_CppX_C4"/>
</dbReference>
<dbReference type="InterPro" id="IPR038366">
    <property type="entry name" value="Znf_CppX_C4_sf"/>
</dbReference>
<dbReference type="NCBIfam" id="TIGR00382">
    <property type="entry name" value="clpX"/>
    <property type="match status" value="1"/>
</dbReference>
<dbReference type="NCBIfam" id="NF003745">
    <property type="entry name" value="PRK05342.1"/>
    <property type="match status" value="1"/>
</dbReference>
<dbReference type="PANTHER" id="PTHR48102:SF7">
    <property type="entry name" value="ATP-DEPENDENT CLP PROTEASE ATP-BINDING SUBUNIT CLPX-LIKE, MITOCHONDRIAL"/>
    <property type="match status" value="1"/>
</dbReference>
<dbReference type="PANTHER" id="PTHR48102">
    <property type="entry name" value="ATP-DEPENDENT CLP PROTEASE ATP-BINDING SUBUNIT CLPX-LIKE, MITOCHONDRIAL-RELATED"/>
    <property type="match status" value="1"/>
</dbReference>
<dbReference type="Pfam" id="PF07724">
    <property type="entry name" value="AAA_2"/>
    <property type="match status" value="1"/>
</dbReference>
<dbReference type="Pfam" id="PF10431">
    <property type="entry name" value="ClpB_D2-small"/>
    <property type="match status" value="1"/>
</dbReference>
<dbReference type="Pfam" id="PF06689">
    <property type="entry name" value="zf-C4_ClpX"/>
    <property type="match status" value="1"/>
</dbReference>
<dbReference type="SMART" id="SM00382">
    <property type="entry name" value="AAA"/>
    <property type="match status" value="1"/>
</dbReference>
<dbReference type="SMART" id="SM01086">
    <property type="entry name" value="ClpB_D2-small"/>
    <property type="match status" value="1"/>
</dbReference>
<dbReference type="SMART" id="SM00994">
    <property type="entry name" value="zf-C4_ClpX"/>
    <property type="match status" value="1"/>
</dbReference>
<dbReference type="SUPFAM" id="SSF57716">
    <property type="entry name" value="Glucocorticoid receptor-like (DNA-binding domain)"/>
    <property type="match status" value="1"/>
</dbReference>
<dbReference type="SUPFAM" id="SSF52540">
    <property type="entry name" value="P-loop containing nucleoside triphosphate hydrolases"/>
    <property type="match status" value="1"/>
</dbReference>
<dbReference type="PROSITE" id="PS51902">
    <property type="entry name" value="CLPX_ZB"/>
    <property type="match status" value="1"/>
</dbReference>
<keyword id="KW-0067">ATP-binding</keyword>
<keyword id="KW-0143">Chaperone</keyword>
<keyword id="KW-0479">Metal-binding</keyword>
<keyword id="KW-0547">Nucleotide-binding</keyword>
<keyword id="KW-0862">Zinc</keyword>
<feature type="chain" id="PRO_1000024667" description="ATP-dependent Clp protease ATP-binding subunit ClpX">
    <location>
        <begin position="1"/>
        <end position="424"/>
    </location>
</feature>
<feature type="domain" description="ClpX-type ZB" evidence="2">
    <location>
        <begin position="2"/>
        <end position="56"/>
    </location>
</feature>
<feature type="binding site" evidence="2">
    <location>
        <position position="15"/>
    </location>
    <ligand>
        <name>Zn(2+)</name>
        <dbReference type="ChEBI" id="CHEBI:29105"/>
    </ligand>
</feature>
<feature type="binding site" evidence="2">
    <location>
        <position position="18"/>
    </location>
    <ligand>
        <name>Zn(2+)</name>
        <dbReference type="ChEBI" id="CHEBI:29105"/>
    </ligand>
</feature>
<feature type="binding site" evidence="2">
    <location>
        <position position="37"/>
    </location>
    <ligand>
        <name>Zn(2+)</name>
        <dbReference type="ChEBI" id="CHEBI:29105"/>
    </ligand>
</feature>
<feature type="binding site" evidence="2">
    <location>
        <position position="40"/>
    </location>
    <ligand>
        <name>Zn(2+)</name>
        <dbReference type="ChEBI" id="CHEBI:29105"/>
    </ligand>
</feature>
<feature type="binding site" evidence="1">
    <location>
        <begin position="120"/>
        <end position="127"/>
    </location>
    <ligand>
        <name>ATP</name>
        <dbReference type="ChEBI" id="CHEBI:30616"/>
    </ligand>
</feature>
<accession>Q2NV78</accession>
<comment type="function">
    <text evidence="1">ATP-dependent specificity component of the Clp protease. It directs the protease to specific substrates. Can perform chaperone functions in the absence of ClpP.</text>
</comment>
<comment type="subunit">
    <text evidence="1">Component of the ClpX-ClpP complex. Forms a hexameric ring that, in the presence of ATP, binds to fourteen ClpP subunits assembled into a disk-like structure with a central cavity, resembling the structure of eukaryotic proteasomes.</text>
</comment>
<comment type="similarity">
    <text evidence="1">Belongs to the ClpX chaperone family.</text>
</comment>
<organism>
    <name type="scientific">Sodalis glossinidius (strain morsitans)</name>
    <dbReference type="NCBI Taxonomy" id="343509"/>
    <lineage>
        <taxon>Bacteria</taxon>
        <taxon>Pseudomonadati</taxon>
        <taxon>Pseudomonadota</taxon>
        <taxon>Gammaproteobacteria</taxon>
        <taxon>Enterobacterales</taxon>
        <taxon>Bruguierivoracaceae</taxon>
        <taxon>Sodalis</taxon>
    </lineage>
</organism>
<name>CLPX_SODGM</name>
<sequence>MTDKRKDGSGKLLYCSFCGKSQHEVRKLIAGPSVYICDECVDLCNDIIREEIKEVAPHRERSALPTPHEIRHHLDDYVIGQEKAKKVLAVAVYNHYKRLRNGDTNNGIELGKSNILLIGPTGSGKTLLAETLARFLDVPFTMADATTLTEAGYVGEDVENIIQKLLQKCDYDVQKAQRGIVYIDEIDKISRKSDNPSITRDVSGEGVQQALLKLIEGTVAAVPPQGGRKHPQQEFLQVDTSKILFICGGAFAGLDKVIEQRTETNRGIGFSATVKGSSEKVTKGELLAQVEPEDLIKFGLIPEFIGRLPVVATLNELSEEALIQILHEPKNALTKQYQALFNLEGVELEFRDEALTAIAKKAMARKTGARGLRSIVEGALLETMYELPSQDSVEKVVIDEAVIAGQSEPLLIYGKHEAQQASGE</sequence>
<proteinExistence type="inferred from homology"/>